<accession>B7LX67</accession>
<evidence type="ECO:0000255" key="1">
    <source>
        <dbReference type="HAMAP-Rule" id="MF_00695"/>
    </source>
</evidence>
<sequence length="213" mass="22948">MAKNYYDITLALAGICQSARLVQQLAHQGHCDADALHVSLNSIIDMNPSSTLAVFGGSEANLRVGLETLLGVLNASSRQGLNAELTRYTLSLMVLERKLSSAKGALDTLGNRINGLQRQLEHFDLQSETLMSAMAAIYVDVISPLGPRIQVTGSPAVLQSPQVQAKVRATLLAGIRAAVLWHQVGGGRLQLMFSRNRLTTQAKQILAHLTPEL</sequence>
<gene>
    <name evidence="1" type="primary">hflD</name>
    <name type="ordered locus">ECIAI1_1170</name>
</gene>
<dbReference type="EMBL" id="CU928160">
    <property type="protein sequence ID" value="CAQ98032.1"/>
    <property type="molecule type" value="Genomic_DNA"/>
</dbReference>
<dbReference type="RefSeq" id="WP_001297479.1">
    <property type="nucleotide sequence ID" value="NC_011741.1"/>
</dbReference>
<dbReference type="SMR" id="B7LX67"/>
<dbReference type="GeneID" id="93776278"/>
<dbReference type="KEGG" id="ecr:ECIAI1_1170"/>
<dbReference type="HOGENOM" id="CLU_098920_0_0_6"/>
<dbReference type="GO" id="GO:0005737">
    <property type="term" value="C:cytoplasm"/>
    <property type="evidence" value="ECO:0007669"/>
    <property type="project" value="UniProtKB-SubCell"/>
</dbReference>
<dbReference type="GO" id="GO:0005886">
    <property type="term" value="C:plasma membrane"/>
    <property type="evidence" value="ECO:0007669"/>
    <property type="project" value="UniProtKB-SubCell"/>
</dbReference>
<dbReference type="FunFam" id="1.10.3890.10:FF:000001">
    <property type="entry name" value="High frequency lysogenization protein HflD homolog"/>
    <property type="match status" value="1"/>
</dbReference>
<dbReference type="Gene3D" id="1.10.3890.10">
    <property type="entry name" value="HflD-like"/>
    <property type="match status" value="1"/>
</dbReference>
<dbReference type="HAMAP" id="MF_00695">
    <property type="entry name" value="HflD_protein"/>
    <property type="match status" value="1"/>
</dbReference>
<dbReference type="InterPro" id="IPR007451">
    <property type="entry name" value="HflD"/>
</dbReference>
<dbReference type="InterPro" id="IPR035932">
    <property type="entry name" value="HflD-like_sf"/>
</dbReference>
<dbReference type="NCBIfam" id="NF001245">
    <property type="entry name" value="PRK00218.1-1"/>
    <property type="match status" value="1"/>
</dbReference>
<dbReference type="NCBIfam" id="NF001246">
    <property type="entry name" value="PRK00218.1-2"/>
    <property type="match status" value="1"/>
</dbReference>
<dbReference type="NCBIfam" id="NF001248">
    <property type="entry name" value="PRK00218.1-4"/>
    <property type="match status" value="1"/>
</dbReference>
<dbReference type="NCBIfam" id="NF001249">
    <property type="entry name" value="PRK00218.1-5"/>
    <property type="match status" value="1"/>
</dbReference>
<dbReference type="PANTHER" id="PTHR38100">
    <property type="entry name" value="HIGH FREQUENCY LYSOGENIZATION PROTEIN HFLD"/>
    <property type="match status" value="1"/>
</dbReference>
<dbReference type="PANTHER" id="PTHR38100:SF1">
    <property type="entry name" value="HIGH FREQUENCY LYSOGENIZATION PROTEIN HFLD"/>
    <property type="match status" value="1"/>
</dbReference>
<dbReference type="Pfam" id="PF04356">
    <property type="entry name" value="DUF489"/>
    <property type="match status" value="1"/>
</dbReference>
<dbReference type="SUPFAM" id="SSF101322">
    <property type="entry name" value="YcfC-like"/>
    <property type="match status" value="1"/>
</dbReference>
<protein>
    <recommendedName>
        <fullName evidence="1">High frequency lysogenization protein HflD</fullName>
    </recommendedName>
</protein>
<reference key="1">
    <citation type="journal article" date="2009" name="PLoS Genet.">
        <title>Organised genome dynamics in the Escherichia coli species results in highly diverse adaptive paths.</title>
        <authorList>
            <person name="Touchon M."/>
            <person name="Hoede C."/>
            <person name="Tenaillon O."/>
            <person name="Barbe V."/>
            <person name="Baeriswyl S."/>
            <person name="Bidet P."/>
            <person name="Bingen E."/>
            <person name="Bonacorsi S."/>
            <person name="Bouchier C."/>
            <person name="Bouvet O."/>
            <person name="Calteau A."/>
            <person name="Chiapello H."/>
            <person name="Clermont O."/>
            <person name="Cruveiller S."/>
            <person name="Danchin A."/>
            <person name="Diard M."/>
            <person name="Dossat C."/>
            <person name="Karoui M.E."/>
            <person name="Frapy E."/>
            <person name="Garry L."/>
            <person name="Ghigo J.M."/>
            <person name="Gilles A.M."/>
            <person name="Johnson J."/>
            <person name="Le Bouguenec C."/>
            <person name="Lescat M."/>
            <person name="Mangenot S."/>
            <person name="Martinez-Jehanne V."/>
            <person name="Matic I."/>
            <person name="Nassif X."/>
            <person name="Oztas S."/>
            <person name="Petit M.A."/>
            <person name="Pichon C."/>
            <person name="Rouy Z."/>
            <person name="Ruf C.S."/>
            <person name="Schneider D."/>
            <person name="Tourret J."/>
            <person name="Vacherie B."/>
            <person name="Vallenet D."/>
            <person name="Medigue C."/>
            <person name="Rocha E.P.C."/>
            <person name="Denamur E."/>
        </authorList>
    </citation>
    <scope>NUCLEOTIDE SEQUENCE [LARGE SCALE GENOMIC DNA]</scope>
    <source>
        <strain>IAI1</strain>
    </source>
</reference>
<organism>
    <name type="scientific">Escherichia coli O8 (strain IAI1)</name>
    <dbReference type="NCBI Taxonomy" id="585034"/>
    <lineage>
        <taxon>Bacteria</taxon>
        <taxon>Pseudomonadati</taxon>
        <taxon>Pseudomonadota</taxon>
        <taxon>Gammaproteobacteria</taxon>
        <taxon>Enterobacterales</taxon>
        <taxon>Enterobacteriaceae</taxon>
        <taxon>Escherichia</taxon>
    </lineage>
</organism>
<name>HFLD_ECO8A</name>
<feature type="chain" id="PRO_1000132285" description="High frequency lysogenization protein HflD">
    <location>
        <begin position="1"/>
        <end position="213"/>
    </location>
</feature>
<feature type="coiled-coil region" evidence="1">
    <location>
        <begin position="79"/>
        <end position="126"/>
    </location>
</feature>
<keyword id="KW-0997">Cell inner membrane</keyword>
<keyword id="KW-1003">Cell membrane</keyword>
<keyword id="KW-0175">Coiled coil</keyword>
<keyword id="KW-0963">Cytoplasm</keyword>
<keyword id="KW-0472">Membrane</keyword>
<comment type="function">
    <text evidence="1">Negative regulator of phage lambda lysogenization. Contributes to the degradation of the phage regulatory protein CII. Acts probably by holding CII on the membrane surface, away from the target promoters, but close to the FtsH protease.</text>
</comment>
<comment type="subunit">
    <text evidence="1">Interacts with CII protein from phage lambda.</text>
</comment>
<comment type="subcellular location">
    <subcellularLocation>
        <location>Cytoplasm</location>
    </subcellularLocation>
    <subcellularLocation>
        <location evidence="1">Cell inner membrane</location>
        <topology evidence="1">Peripheral membrane protein</topology>
        <orientation evidence="1">Cytoplasmic side</orientation>
    </subcellularLocation>
</comment>
<comment type="similarity">
    <text evidence="1">Belongs to the HflD family.</text>
</comment>
<proteinExistence type="inferred from homology"/>